<evidence type="ECO:0000250" key="1"/>
<evidence type="ECO:0000250" key="2">
    <source>
        <dbReference type="UniProtKB" id="P15289"/>
    </source>
</evidence>
<evidence type="ECO:0000255" key="3"/>
<evidence type="ECO:0000305" key="4"/>
<name>GALNS_CANLF</name>
<organism>
    <name type="scientific">Canis lupus familiaris</name>
    <name type="common">Dog</name>
    <name type="synonym">Canis familiaris</name>
    <dbReference type="NCBI Taxonomy" id="9615"/>
    <lineage>
        <taxon>Eukaryota</taxon>
        <taxon>Metazoa</taxon>
        <taxon>Chordata</taxon>
        <taxon>Craniata</taxon>
        <taxon>Vertebrata</taxon>
        <taxon>Euteleostomi</taxon>
        <taxon>Mammalia</taxon>
        <taxon>Eutheria</taxon>
        <taxon>Laurasiatheria</taxon>
        <taxon>Carnivora</taxon>
        <taxon>Caniformia</taxon>
        <taxon>Canidae</taxon>
        <taxon>Canis</taxon>
    </lineage>
</organism>
<keyword id="KW-0106">Calcium</keyword>
<keyword id="KW-1015">Disulfide bond</keyword>
<keyword id="KW-0325">Glycoprotein</keyword>
<keyword id="KW-0378">Hydrolase</keyword>
<keyword id="KW-0458">Lysosome</keyword>
<keyword id="KW-0479">Metal-binding</keyword>
<keyword id="KW-1185">Reference proteome</keyword>
<keyword id="KW-0732">Signal</keyword>
<feature type="signal peptide" evidence="1">
    <location>
        <begin position="1"/>
        <end position="25"/>
    </location>
</feature>
<feature type="chain" id="PRO_0000273147" description="N-acetylgalactosamine-6-sulfatase">
    <location>
        <begin position="26"/>
        <end position="522"/>
    </location>
</feature>
<feature type="region of interest" description="Catalytic domain" evidence="1">
    <location>
        <begin position="27"/>
        <end position="379"/>
    </location>
</feature>
<feature type="active site" description="Nucleophile" evidence="2">
    <location>
        <position position="78"/>
    </location>
</feature>
<feature type="active site" evidence="2">
    <location>
        <position position="141"/>
    </location>
</feature>
<feature type="binding site" evidence="1">
    <location>
        <position position="38"/>
    </location>
    <ligand>
        <name>Ca(2+)</name>
        <dbReference type="ChEBI" id="CHEBI:29108"/>
    </ligand>
</feature>
<feature type="binding site" evidence="1">
    <location>
        <position position="39"/>
    </location>
    <ligand>
        <name>Ca(2+)</name>
        <dbReference type="ChEBI" id="CHEBI:29108"/>
    </ligand>
</feature>
<feature type="binding site" description="via 3-oxoalanine" evidence="1">
    <location>
        <position position="78"/>
    </location>
    <ligand>
        <name>Ca(2+)</name>
        <dbReference type="ChEBI" id="CHEBI:29108"/>
    </ligand>
</feature>
<feature type="binding site" evidence="1">
    <location>
        <position position="288"/>
    </location>
    <ligand>
        <name>Ca(2+)</name>
        <dbReference type="ChEBI" id="CHEBI:29108"/>
    </ligand>
</feature>
<feature type="binding site" evidence="1">
    <location>
        <position position="289"/>
    </location>
    <ligand>
        <name>Ca(2+)</name>
        <dbReference type="ChEBI" id="CHEBI:29108"/>
    </ligand>
</feature>
<feature type="modified residue" description="3-oxoalanine (Cys)" evidence="2">
    <location>
        <position position="78"/>
    </location>
</feature>
<feature type="glycosylation site" description="N-linked (GlcNAc...) asparagine" evidence="3">
    <location>
        <position position="203"/>
    </location>
</feature>
<feature type="glycosylation site" description="N-linked (GlcNAc...) asparagine" evidence="3">
    <location>
        <position position="423"/>
    </location>
</feature>
<feature type="disulfide bond" evidence="1">
    <location>
        <begin position="308"/>
        <end position="419"/>
    </location>
</feature>
<feature type="disulfide bond" evidence="1">
    <location>
        <begin position="489"/>
        <end position="518"/>
    </location>
</feature>
<feature type="disulfide bond" evidence="1">
    <location>
        <begin position="501"/>
        <end position="507"/>
    </location>
</feature>
<comment type="catalytic activity">
    <reaction>
        <text>Hydrolysis of the 6-sulfate groups of the N-acetyl-D-galactosamine 6-sulfate units of chondroitin sulfate and of the D-galactose 6-sulfate units of keratan sulfate.</text>
        <dbReference type="EC" id="3.1.6.4"/>
    </reaction>
</comment>
<comment type="cofactor">
    <cofactor evidence="1">
        <name>Ca(2+)</name>
        <dbReference type="ChEBI" id="CHEBI:29108"/>
    </cofactor>
    <text evidence="1">Binds 1 Ca(2+) ion per subunit.</text>
</comment>
<comment type="subunit">
    <text evidence="1">Homodimer.</text>
</comment>
<comment type="subcellular location">
    <subcellularLocation>
        <location evidence="1">Lysosome</location>
    </subcellularLocation>
</comment>
<comment type="PTM">
    <text evidence="1">The conversion to 3-oxoalanine (also known as C-formylglycine, FGly), of a serine or cysteine residue in prokaryotes and of a cysteine residue in eukaryotes, is critical for catalytic activity.</text>
</comment>
<comment type="similarity">
    <text evidence="4">Belongs to the sulfatase family.</text>
</comment>
<accession>Q32KH5</accession>
<proteinExistence type="evidence at transcript level"/>
<sequence>MAPVAAATGWRLLLVLSAAGLGAAGAPQPPNILLLLMDDMGWGDLGIYGEPSRETPNLDRMAAEGMLFPSFYSANPLCSPSRAALLTGRLPIRNGFYTTNRHARNAYTPQEIVGGIPDQEHVLPELLKEAGYVSKIVGKWHLGHRPQFHPLKHGFDEWFGSPNCHFGPYDNRARPNIPVYRDWEMVGRYYEEFPINLKTGEANLTQVYLQEALDFIKRQQAAQRPFFLYWAIDATHAPVYASRPFLGTSQRGRYGDAVREIDNSVGKILSLLQDLRISENTFVFFTSDNGAALISAPNQGGSNGPFLCGKQTTFEGGMREPAIAWWPGRIPAGRVSHQLGSIMDLFTTSLSLAGLAPPSDRVIDGLDLLPAMLGGQLTDRPIFYYRGDTLMAVTLGQYKAHFWTWTNSWEEFRQGIDFCPGQNVSGVTTHTQEEHTKLPLIFHLGRDPGERFPLSFASTEYLDVLQRVTPVVQQHQKTLVPGQPQLNVCDRAVMNWAPPGCEKLGKCLTPPESTPKKCSWPH</sequence>
<dbReference type="EC" id="3.1.6.4"/>
<dbReference type="EMBL" id="BN000762">
    <property type="protein sequence ID" value="CAI85008.1"/>
    <property type="molecule type" value="mRNA"/>
</dbReference>
<dbReference type="RefSeq" id="NP_001041585.1">
    <property type="nucleotide sequence ID" value="NM_001048120.1"/>
</dbReference>
<dbReference type="SMR" id="Q32KH5"/>
<dbReference type="FunCoup" id="Q32KH5">
    <property type="interactions" value="166"/>
</dbReference>
<dbReference type="STRING" id="9615.ENSCAFP00000029422"/>
<dbReference type="GlyCosmos" id="Q32KH5">
    <property type="glycosylation" value="2 sites, No reported glycans"/>
</dbReference>
<dbReference type="PaxDb" id="9612-ENSCAFP00000029422"/>
<dbReference type="Ensembl" id="ENSCAFT00000031604.5">
    <property type="protein sequence ID" value="ENSCAFP00000029422.4"/>
    <property type="gene ID" value="ENSCAFG00000019861.5"/>
</dbReference>
<dbReference type="Ensembl" id="ENSCAFT00040017699.1">
    <property type="protein sequence ID" value="ENSCAFP00040015362.1"/>
    <property type="gene ID" value="ENSCAFG00040009528.1"/>
</dbReference>
<dbReference type="GeneID" id="489661"/>
<dbReference type="KEGG" id="cfa:489661"/>
<dbReference type="CTD" id="2588"/>
<dbReference type="VGNC" id="VGNC:53388">
    <property type="gene designation" value="GALNS"/>
</dbReference>
<dbReference type="eggNOG" id="KOG3867">
    <property type="taxonomic scope" value="Eukaryota"/>
</dbReference>
<dbReference type="InParanoid" id="Q32KH5"/>
<dbReference type="OrthoDB" id="103349at2759"/>
<dbReference type="Reactome" id="R-CFA-2022857">
    <property type="pathway name" value="Keratan sulfate degradation"/>
</dbReference>
<dbReference type="Reactome" id="R-CFA-6798695">
    <property type="pathway name" value="Neutrophil degranulation"/>
</dbReference>
<dbReference type="Proteomes" id="UP000002254">
    <property type="component" value="Chromosome 5"/>
</dbReference>
<dbReference type="Proteomes" id="UP000694429">
    <property type="component" value="Unplaced"/>
</dbReference>
<dbReference type="Proteomes" id="UP000694542">
    <property type="component" value="Chromosome 5"/>
</dbReference>
<dbReference type="Proteomes" id="UP000805418">
    <property type="component" value="Unplaced"/>
</dbReference>
<dbReference type="Bgee" id="ENSCAFG00000019861">
    <property type="expression patterns" value="Expressed in granulocyte and 46 other cell types or tissues"/>
</dbReference>
<dbReference type="GO" id="GO:0005764">
    <property type="term" value="C:lysosome"/>
    <property type="evidence" value="ECO:0007669"/>
    <property type="project" value="UniProtKB-SubCell"/>
</dbReference>
<dbReference type="GO" id="GO:0004065">
    <property type="term" value="F:arylsulfatase activity"/>
    <property type="evidence" value="ECO:0000318"/>
    <property type="project" value="GO_Central"/>
</dbReference>
<dbReference type="GO" id="GO:0046872">
    <property type="term" value="F:metal ion binding"/>
    <property type="evidence" value="ECO:0007669"/>
    <property type="project" value="UniProtKB-KW"/>
</dbReference>
<dbReference type="GO" id="GO:0043890">
    <property type="term" value="F:N-acetylgalactosamine-6-sulfatase activity"/>
    <property type="evidence" value="ECO:0007669"/>
    <property type="project" value="UniProtKB-EC"/>
</dbReference>
<dbReference type="CDD" id="cd16157">
    <property type="entry name" value="GALNS"/>
    <property type="match status" value="1"/>
</dbReference>
<dbReference type="FunFam" id="3.30.1120.10:FF:000004">
    <property type="entry name" value="Galactosamine (N-acetyl)-6-sulfatase"/>
    <property type="match status" value="1"/>
</dbReference>
<dbReference type="FunFam" id="3.40.720.10:FF:000021">
    <property type="entry name" value="Galactosamine (N-acetyl)-6-sulfatase"/>
    <property type="match status" value="1"/>
</dbReference>
<dbReference type="Gene3D" id="3.30.1120.10">
    <property type="match status" value="1"/>
</dbReference>
<dbReference type="Gene3D" id="3.40.720.10">
    <property type="entry name" value="Alkaline Phosphatase, subunit A"/>
    <property type="match status" value="1"/>
</dbReference>
<dbReference type="InterPro" id="IPR017850">
    <property type="entry name" value="Alkaline_phosphatase_core_sf"/>
</dbReference>
<dbReference type="InterPro" id="IPR035626">
    <property type="entry name" value="GALNS"/>
</dbReference>
<dbReference type="InterPro" id="IPR050738">
    <property type="entry name" value="Sulfatase"/>
</dbReference>
<dbReference type="InterPro" id="IPR024607">
    <property type="entry name" value="Sulfatase_CS"/>
</dbReference>
<dbReference type="InterPro" id="IPR000917">
    <property type="entry name" value="Sulfatase_N"/>
</dbReference>
<dbReference type="PANTHER" id="PTHR42693">
    <property type="entry name" value="ARYLSULFATASE FAMILY MEMBER"/>
    <property type="match status" value="1"/>
</dbReference>
<dbReference type="PANTHER" id="PTHR42693:SF47">
    <property type="entry name" value="N-ACETYLGALACTOSAMINE-6-SULFATASE"/>
    <property type="match status" value="1"/>
</dbReference>
<dbReference type="Pfam" id="PF00884">
    <property type="entry name" value="Sulfatase"/>
    <property type="match status" value="1"/>
</dbReference>
<dbReference type="Pfam" id="PF14707">
    <property type="entry name" value="Sulfatase_C"/>
    <property type="match status" value="1"/>
</dbReference>
<dbReference type="SUPFAM" id="SSF53649">
    <property type="entry name" value="Alkaline phosphatase-like"/>
    <property type="match status" value="1"/>
</dbReference>
<dbReference type="PROSITE" id="PS00523">
    <property type="entry name" value="SULFATASE_1"/>
    <property type="match status" value="1"/>
</dbReference>
<dbReference type="PROSITE" id="PS00149">
    <property type="entry name" value="SULFATASE_2"/>
    <property type="match status" value="1"/>
</dbReference>
<gene>
    <name type="primary">GALNS</name>
</gene>
<protein>
    <recommendedName>
        <fullName>N-acetylgalactosamine-6-sulfatase</fullName>
        <ecNumber>3.1.6.4</ecNumber>
    </recommendedName>
    <alternativeName>
        <fullName>Chondroitinsulfatase</fullName>
        <shortName>Chondroitinase</shortName>
    </alternativeName>
    <alternativeName>
        <fullName>Galactose-6-sulfate sulfatase</fullName>
    </alternativeName>
    <alternativeName>
        <fullName>N-acetylgalactosamine-6-sulfate sulfatase</fullName>
        <shortName>GalNAc6S sulfatase</shortName>
    </alternativeName>
</protein>
<reference key="1">
    <citation type="journal article" date="2005" name="Nature">
        <title>Genome sequence, comparative analysis and haplotype structure of the domestic dog.</title>
        <authorList>
            <person name="Lindblad-Toh K."/>
            <person name="Wade C.M."/>
            <person name="Mikkelsen T.S."/>
            <person name="Karlsson E.K."/>
            <person name="Jaffe D.B."/>
            <person name="Kamal M."/>
            <person name="Clamp M."/>
            <person name="Chang J.L."/>
            <person name="Kulbokas E.J. III"/>
            <person name="Zody M.C."/>
            <person name="Mauceli E."/>
            <person name="Xie X."/>
            <person name="Breen M."/>
            <person name="Wayne R.K."/>
            <person name="Ostrander E.A."/>
            <person name="Ponting C.P."/>
            <person name="Galibert F."/>
            <person name="Smith D.R."/>
            <person name="deJong P.J."/>
            <person name="Kirkness E.F."/>
            <person name="Alvarez P."/>
            <person name="Biagi T."/>
            <person name="Brockman W."/>
            <person name="Butler J."/>
            <person name="Chin C.-W."/>
            <person name="Cook A."/>
            <person name="Cuff J."/>
            <person name="Daly M.J."/>
            <person name="DeCaprio D."/>
            <person name="Gnerre S."/>
            <person name="Grabherr M."/>
            <person name="Kellis M."/>
            <person name="Kleber M."/>
            <person name="Bardeleben C."/>
            <person name="Goodstadt L."/>
            <person name="Heger A."/>
            <person name="Hitte C."/>
            <person name="Kim L."/>
            <person name="Koepfli K.-P."/>
            <person name="Parker H.G."/>
            <person name="Pollinger J.P."/>
            <person name="Searle S.M.J."/>
            <person name="Sutter N.B."/>
            <person name="Thomas R."/>
            <person name="Webber C."/>
            <person name="Baldwin J."/>
            <person name="Abebe A."/>
            <person name="Abouelleil A."/>
            <person name="Aftuck L."/>
            <person name="Ait-Zahra M."/>
            <person name="Aldredge T."/>
            <person name="Allen N."/>
            <person name="An P."/>
            <person name="Anderson S."/>
            <person name="Antoine C."/>
            <person name="Arachchi H."/>
            <person name="Aslam A."/>
            <person name="Ayotte L."/>
            <person name="Bachantsang P."/>
            <person name="Barry A."/>
            <person name="Bayul T."/>
            <person name="Benamara M."/>
            <person name="Berlin A."/>
            <person name="Bessette D."/>
            <person name="Blitshteyn B."/>
            <person name="Bloom T."/>
            <person name="Blye J."/>
            <person name="Boguslavskiy L."/>
            <person name="Bonnet C."/>
            <person name="Boukhgalter B."/>
            <person name="Brown A."/>
            <person name="Cahill P."/>
            <person name="Calixte N."/>
            <person name="Camarata J."/>
            <person name="Cheshatsang Y."/>
            <person name="Chu J."/>
            <person name="Citroen M."/>
            <person name="Collymore A."/>
            <person name="Cooke P."/>
            <person name="Dawoe T."/>
            <person name="Daza R."/>
            <person name="Decktor K."/>
            <person name="DeGray S."/>
            <person name="Dhargay N."/>
            <person name="Dooley K."/>
            <person name="Dooley K."/>
            <person name="Dorje P."/>
            <person name="Dorjee K."/>
            <person name="Dorris L."/>
            <person name="Duffey N."/>
            <person name="Dupes A."/>
            <person name="Egbiremolen O."/>
            <person name="Elong R."/>
            <person name="Falk J."/>
            <person name="Farina A."/>
            <person name="Faro S."/>
            <person name="Ferguson D."/>
            <person name="Ferreira P."/>
            <person name="Fisher S."/>
            <person name="FitzGerald M."/>
            <person name="Foley K."/>
            <person name="Foley C."/>
            <person name="Franke A."/>
            <person name="Friedrich D."/>
            <person name="Gage D."/>
            <person name="Garber M."/>
            <person name="Gearin G."/>
            <person name="Giannoukos G."/>
            <person name="Goode T."/>
            <person name="Goyette A."/>
            <person name="Graham J."/>
            <person name="Grandbois E."/>
            <person name="Gyaltsen K."/>
            <person name="Hafez N."/>
            <person name="Hagopian D."/>
            <person name="Hagos B."/>
            <person name="Hall J."/>
            <person name="Healy C."/>
            <person name="Hegarty R."/>
            <person name="Honan T."/>
            <person name="Horn A."/>
            <person name="Houde N."/>
            <person name="Hughes L."/>
            <person name="Hunnicutt L."/>
            <person name="Husby M."/>
            <person name="Jester B."/>
            <person name="Jones C."/>
            <person name="Kamat A."/>
            <person name="Kanga B."/>
            <person name="Kells C."/>
            <person name="Khazanovich D."/>
            <person name="Kieu A.C."/>
            <person name="Kisner P."/>
            <person name="Kumar M."/>
            <person name="Lance K."/>
            <person name="Landers T."/>
            <person name="Lara M."/>
            <person name="Lee W."/>
            <person name="Leger J.-P."/>
            <person name="Lennon N."/>
            <person name="Leuper L."/>
            <person name="LeVine S."/>
            <person name="Liu J."/>
            <person name="Liu X."/>
            <person name="Lokyitsang Y."/>
            <person name="Lokyitsang T."/>
            <person name="Lui A."/>
            <person name="Macdonald J."/>
            <person name="Major J."/>
            <person name="Marabella R."/>
            <person name="Maru K."/>
            <person name="Matthews C."/>
            <person name="McDonough S."/>
            <person name="Mehta T."/>
            <person name="Meldrim J."/>
            <person name="Melnikov A."/>
            <person name="Meneus L."/>
            <person name="Mihalev A."/>
            <person name="Mihova T."/>
            <person name="Miller K."/>
            <person name="Mittelman R."/>
            <person name="Mlenga V."/>
            <person name="Mulrain L."/>
            <person name="Munson G."/>
            <person name="Navidi A."/>
            <person name="Naylor J."/>
            <person name="Nguyen T."/>
            <person name="Nguyen N."/>
            <person name="Nguyen C."/>
            <person name="Nguyen T."/>
            <person name="Nicol R."/>
            <person name="Norbu N."/>
            <person name="Norbu C."/>
            <person name="Novod N."/>
            <person name="Nyima T."/>
            <person name="Olandt P."/>
            <person name="O'Neill B."/>
            <person name="O'Neill K."/>
            <person name="Osman S."/>
            <person name="Oyono L."/>
            <person name="Patti C."/>
            <person name="Perrin D."/>
            <person name="Phunkhang P."/>
            <person name="Pierre F."/>
            <person name="Priest M."/>
            <person name="Rachupka A."/>
            <person name="Raghuraman S."/>
            <person name="Rameau R."/>
            <person name="Ray V."/>
            <person name="Raymond C."/>
            <person name="Rege F."/>
            <person name="Rise C."/>
            <person name="Rogers J."/>
            <person name="Rogov P."/>
            <person name="Sahalie J."/>
            <person name="Settipalli S."/>
            <person name="Sharpe T."/>
            <person name="Shea T."/>
            <person name="Sheehan M."/>
            <person name="Sherpa N."/>
            <person name="Shi J."/>
            <person name="Shih D."/>
            <person name="Sloan J."/>
            <person name="Smith C."/>
            <person name="Sparrow T."/>
            <person name="Stalker J."/>
            <person name="Stange-Thomann N."/>
            <person name="Stavropoulos S."/>
            <person name="Stone C."/>
            <person name="Stone S."/>
            <person name="Sykes S."/>
            <person name="Tchuinga P."/>
            <person name="Tenzing P."/>
            <person name="Tesfaye S."/>
            <person name="Thoulutsang D."/>
            <person name="Thoulutsang Y."/>
            <person name="Topham K."/>
            <person name="Topping I."/>
            <person name="Tsamla T."/>
            <person name="Vassiliev H."/>
            <person name="Venkataraman V."/>
            <person name="Vo A."/>
            <person name="Wangchuk T."/>
            <person name="Wangdi T."/>
            <person name="Weiand M."/>
            <person name="Wilkinson J."/>
            <person name="Wilson A."/>
            <person name="Yadav S."/>
            <person name="Yang S."/>
            <person name="Yang X."/>
            <person name="Young G."/>
            <person name="Yu Q."/>
            <person name="Zainoun J."/>
            <person name="Zembek L."/>
            <person name="Zimmer A."/>
            <person name="Lander E.S."/>
        </authorList>
    </citation>
    <scope>NUCLEOTIDE SEQUENCE [LARGE SCALE GENOMIC DNA]</scope>
    <source>
        <strain>Boxer</strain>
    </source>
</reference>
<reference key="2">
    <citation type="journal article" date="2005" name="Hum. Mol. Genet.">
        <title>Sulfatases and sulfatase modifying factors: an exclusive and promiscuous relationship.</title>
        <authorList>
            <person name="Sardiello M."/>
            <person name="Annunziata I."/>
            <person name="Roma G."/>
            <person name="Ballabio A."/>
        </authorList>
    </citation>
    <scope>IDENTIFICATION</scope>
</reference>